<evidence type="ECO:0000250" key="1"/>
<evidence type="ECO:0000255" key="2"/>
<evidence type="ECO:0000305" key="3"/>
<comment type="subcellular location">
    <subcellularLocation>
        <location evidence="1">Secreted</location>
    </subcellularLocation>
</comment>
<comment type="similarity">
    <text evidence="3">Belongs to the DEFL family.</text>
</comment>
<comment type="sequence caution" evidence="3">
    <conflict type="erroneous gene model prediction">
        <sequence resource="EMBL-CDS" id="AAD21415"/>
    </conflict>
</comment>
<comment type="sequence caution" evidence="3">
    <conflict type="erroneous termination">
        <sequence resource="EMBL-CDS" id="ABK28312"/>
    </conflict>
    <text>Extended C-terminus.</text>
</comment>
<accession>Q1G3Y1</accession>
<accession>A0MDJ9</accession>
<accession>Q9SYA4</accession>
<reference key="1">
    <citation type="journal article" date="2000" name="Nature">
        <title>Sequence and analysis of chromosome 1 of the plant Arabidopsis thaliana.</title>
        <authorList>
            <person name="Theologis A."/>
            <person name="Ecker J.R."/>
            <person name="Palm C.J."/>
            <person name="Federspiel N.A."/>
            <person name="Kaul S."/>
            <person name="White O."/>
            <person name="Alonso J."/>
            <person name="Altafi H."/>
            <person name="Araujo R."/>
            <person name="Bowman C.L."/>
            <person name="Brooks S.Y."/>
            <person name="Buehler E."/>
            <person name="Chan A."/>
            <person name="Chao Q."/>
            <person name="Chen H."/>
            <person name="Cheuk R.F."/>
            <person name="Chin C.W."/>
            <person name="Chung M.K."/>
            <person name="Conn L."/>
            <person name="Conway A.B."/>
            <person name="Conway A.R."/>
            <person name="Creasy T.H."/>
            <person name="Dewar K."/>
            <person name="Dunn P."/>
            <person name="Etgu P."/>
            <person name="Feldblyum T.V."/>
            <person name="Feng J.-D."/>
            <person name="Fong B."/>
            <person name="Fujii C.Y."/>
            <person name="Gill J.E."/>
            <person name="Goldsmith A.D."/>
            <person name="Haas B."/>
            <person name="Hansen N.F."/>
            <person name="Hughes B."/>
            <person name="Huizar L."/>
            <person name="Hunter J.L."/>
            <person name="Jenkins J."/>
            <person name="Johnson-Hopson C."/>
            <person name="Khan S."/>
            <person name="Khaykin E."/>
            <person name="Kim C.J."/>
            <person name="Koo H.L."/>
            <person name="Kremenetskaia I."/>
            <person name="Kurtz D.B."/>
            <person name="Kwan A."/>
            <person name="Lam B."/>
            <person name="Langin-Hooper S."/>
            <person name="Lee A."/>
            <person name="Lee J.M."/>
            <person name="Lenz C.A."/>
            <person name="Li J.H."/>
            <person name="Li Y.-P."/>
            <person name="Lin X."/>
            <person name="Liu S.X."/>
            <person name="Liu Z.A."/>
            <person name="Luros J.S."/>
            <person name="Maiti R."/>
            <person name="Marziali A."/>
            <person name="Militscher J."/>
            <person name="Miranda M."/>
            <person name="Nguyen M."/>
            <person name="Nierman W.C."/>
            <person name="Osborne B.I."/>
            <person name="Pai G."/>
            <person name="Peterson J."/>
            <person name="Pham P.K."/>
            <person name="Rizzo M."/>
            <person name="Rooney T."/>
            <person name="Rowley D."/>
            <person name="Sakano H."/>
            <person name="Salzberg S.L."/>
            <person name="Schwartz J.R."/>
            <person name="Shinn P."/>
            <person name="Southwick A.M."/>
            <person name="Sun H."/>
            <person name="Tallon L.J."/>
            <person name="Tambunga G."/>
            <person name="Toriumi M.J."/>
            <person name="Town C.D."/>
            <person name="Utterback T."/>
            <person name="Van Aken S."/>
            <person name="Vaysberg M."/>
            <person name="Vysotskaia V.S."/>
            <person name="Walker M."/>
            <person name="Wu D."/>
            <person name="Yu G."/>
            <person name="Fraser C.M."/>
            <person name="Venter J.C."/>
            <person name="Davis R.W."/>
        </authorList>
    </citation>
    <scope>NUCLEOTIDE SEQUENCE [LARGE SCALE GENOMIC DNA]</scope>
    <source>
        <strain>cv. Columbia</strain>
    </source>
</reference>
<reference key="2">
    <citation type="journal article" date="2017" name="Plant J.">
        <title>Araport11: a complete reannotation of the Arabidopsis thaliana reference genome.</title>
        <authorList>
            <person name="Cheng C.Y."/>
            <person name="Krishnakumar V."/>
            <person name="Chan A.P."/>
            <person name="Thibaud-Nissen F."/>
            <person name="Schobel S."/>
            <person name="Town C.D."/>
        </authorList>
    </citation>
    <scope>GENOME REANNOTATION</scope>
    <source>
        <strain>cv. Columbia</strain>
    </source>
</reference>
<reference key="3">
    <citation type="journal article" date="2006" name="Plant Biotechnol. J.">
        <title>Simultaneous high-throughput recombinational cloning of open reading frames in closed and open configurations.</title>
        <authorList>
            <person name="Underwood B.A."/>
            <person name="Vanderhaeghen R."/>
            <person name="Whitford R."/>
            <person name="Town C.D."/>
            <person name="Hilson P."/>
        </authorList>
    </citation>
    <scope>NUCLEOTIDE SEQUENCE [LARGE SCALE MRNA]</scope>
    <source>
        <strain>cv. Columbia</strain>
    </source>
</reference>
<reference key="4">
    <citation type="journal article" date="2007" name="BMC Genomics">
        <title>Experimental validation of novel genes predicted in the un-annotated regions of the Arabidopsis genome.</title>
        <authorList>
            <person name="Moskal W.A. Jr."/>
            <person name="Wu H.C."/>
            <person name="Underwood B.A."/>
            <person name="Wang W."/>
            <person name="Town C.D."/>
            <person name="Xiao Y.-L."/>
        </authorList>
    </citation>
    <scope>NUCLEOTIDE SEQUENCE [LARGE SCALE MRNA]</scope>
    <source>
        <strain>cv. Columbia</strain>
    </source>
</reference>
<reference key="5">
    <citation type="journal article" date="2007" name="Plant J.">
        <title>Small cysteine-rich peptides resembling antimicrobial peptides have been under-predicted in plants.</title>
        <authorList>
            <person name="Silverstein K.A.T."/>
            <person name="Moskal W.A. Jr."/>
            <person name="Wu H.C."/>
            <person name="Underwood B.A."/>
            <person name="Graham M.A."/>
            <person name="Town C.D."/>
            <person name="VandenBosch K.A."/>
        </authorList>
    </citation>
    <scope>NUCLEOTIDE SEQUENCE [LARGE SCALE MRNA]</scope>
    <source>
        <strain>cv. Columbia</strain>
    </source>
</reference>
<reference key="6">
    <citation type="journal article" date="2005" name="Plant Physiol.">
        <title>Genome organization of more than 300 defensin-like genes in Arabidopsis.</title>
        <authorList>
            <person name="Silverstein K.A.T."/>
            <person name="Graham M.A."/>
            <person name="Paape T.D."/>
            <person name="VandenBosch K.A."/>
        </authorList>
    </citation>
    <scope>GENE FAMILY</scope>
</reference>
<gene>
    <name type="ordered locus">At1g61688</name>
    <name type="ORF">T13M11.4</name>
</gene>
<sequence>MANTPKTLIAFVFSVIVIISYVHCHTTIASAPSSGEPTTYATGPALSKHSHDNDGICFVTPACFAPGQYEIGCIVYCHESHYKHYKCVNRSCCCYNTDKNASELK</sequence>
<keyword id="KW-0929">Antimicrobial</keyword>
<keyword id="KW-1015">Disulfide bond</keyword>
<keyword id="KW-0295">Fungicide</keyword>
<keyword id="KW-0611">Plant defense</keyword>
<keyword id="KW-1185">Reference proteome</keyword>
<keyword id="KW-0964">Secreted</keyword>
<keyword id="KW-0732">Signal</keyword>
<dbReference type="EMBL" id="AC005882">
    <property type="protein sequence ID" value="AAD21415.1"/>
    <property type="status" value="ALT_SEQ"/>
    <property type="molecule type" value="Genomic_DNA"/>
</dbReference>
<dbReference type="EMBL" id="CP002684">
    <property type="protein sequence ID" value="AEE33875.1"/>
    <property type="molecule type" value="Genomic_DNA"/>
</dbReference>
<dbReference type="EMBL" id="DQ487453">
    <property type="protein sequence ID" value="ABF59183.1"/>
    <property type="molecule type" value="mRNA"/>
</dbReference>
<dbReference type="EMBL" id="DQ652615">
    <property type="protein sequence ID" value="ABK28312.1"/>
    <property type="status" value="ALT_SEQ"/>
    <property type="molecule type" value="mRNA"/>
</dbReference>
<dbReference type="EMBL" id="EF182857">
    <property type="status" value="NOT_ANNOTATED_CDS"/>
    <property type="molecule type" value="mRNA"/>
</dbReference>
<dbReference type="EMBL" id="EF182936">
    <property type="status" value="NOT_ANNOTATED_CDS"/>
    <property type="molecule type" value="mRNA"/>
</dbReference>
<dbReference type="PIR" id="D96642">
    <property type="entry name" value="D96642"/>
</dbReference>
<dbReference type="RefSeq" id="NP_001031218.2">
    <property type="nucleotide sequence ID" value="NM_001036141.4"/>
</dbReference>
<dbReference type="TCDB" id="1.C.45.2.1">
    <property type="family name" value="the plant defensin (plant defensin) family"/>
</dbReference>
<dbReference type="GlyGen" id="Q1G3Y1">
    <property type="glycosylation" value="1 site"/>
</dbReference>
<dbReference type="PaxDb" id="3702-AT1G61688.1"/>
<dbReference type="EnsemblPlants" id="AT1G61688.1">
    <property type="protein sequence ID" value="AT1G61688.1"/>
    <property type="gene ID" value="AT1G61688"/>
</dbReference>
<dbReference type="GeneID" id="3767601"/>
<dbReference type="Gramene" id="AT1G61688.1">
    <property type="protein sequence ID" value="AT1G61688.1"/>
    <property type="gene ID" value="AT1G61688"/>
</dbReference>
<dbReference type="KEGG" id="ath:AT1G61688"/>
<dbReference type="Araport" id="AT1G61688"/>
<dbReference type="TAIR" id="AT1G61688"/>
<dbReference type="HOGENOM" id="CLU_183259_0_0_1"/>
<dbReference type="InParanoid" id="Q1G3Y1"/>
<dbReference type="OMA" id="CHESHYK"/>
<dbReference type="PhylomeDB" id="Q1G3Y1"/>
<dbReference type="PRO" id="PR:Q1G3Y1"/>
<dbReference type="Proteomes" id="UP000006548">
    <property type="component" value="Chromosome 1"/>
</dbReference>
<dbReference type="ExpressionAtlas" id="Q1G3Y1">
    <property type="expression patterns" value="baseline"/>
</dbReference>
<dbReference type="GO" id="GO:0005576">
    <property type="term" value="C:extracellular region"/>
    <property type="evidence" value="ECO:0007669"/>
    <property type="project" value="UniProtKB-SubCell"/>
</dbReference>
<dbReference type="GO" id="GO:0050832">
    <property type="term" value="P:defense response to fungus"/>
    <property type="evidence" value="ECO:0007669"/>
    <property type="project" value="UniProtKB-KW"/>
</dbReference>
<dbReference type="GO" id="GO:0031640">
    <property type="term" value="P:killing of cells of another organism"/>
    <property type="evidence" value="ECO:0007669"/>
    <property type="project" value="UniProtKB-KW"/>
</dbReference>
<organism>
    <name type="scientific">Arabidopsis thaliana</name>
    <name type="common">Mouse-ear cress</name>
    <dbReference type="NCBI Taxonomy" id="3702"/>
    <lineage>
        <taxon>Eukaryota</taxon>
        <taxon>Viridiplantae</taxon>
        <taxon>Streptophyta</taxon>
        <taxon>Embryophyta</taxon>
        <taxon>Tracheophyta</taxon>
        <taxon>Spermatophyta</taxon>
        <taxon>Magnoliopsida</taxon>
        <taxon>eudicotyledons</taxon>
        <taxon>Gunneridae</taxon>
        <taxon>Pentapetalae</taxon>
        <taxon>rosids</taxon>
        <taxon>malvids</taxon>
        <taxon>Brassicales</taxon>
        <taxon>Brassicaceae</taxon>
        <taxon>Camelineae</taxon>
        <taxon>Arabidopsis</taxon>
    </lineage>
</organism>
<proteinExistence type="inferred from homology"/>
<feature type="signal peptide" evidence="2">
    <location>
        <begin position="1"/>
        <end position="24"/>
    </location>
</feature>
<feature type="chain" id="PRO_0000379669" description="Defensin-like protein 106">
    <location>
        <begin position="25"/>
        <end position="105"/>
    </location>
</feature>
<feature type="disulfide bond" evidence="1">
    <location>
        <begin position="57"/>
        <end position="94"/>
    </location>
</feature>
<feature type="disulfide bond" evidence="1">
    <location>
        <begin position="63"/>
        <end position="87"/>
    </location>
</feature>
<feature type="disulfide bond" evidence="1">
    <location>
        <begin position="73"/>
        <end position="92"/>
    </location>
</feature>
<feature type="disulfide bond" evidence="1">
    <location>
        <begin position="77"/>
        <end position="93"/>
    </location>
</feature>
<name>DF106_ARATH</name>
<protein>
    <recommendedName>
        <fullName>Defensin-like protein 106</fullName>
    </recommendedName>
</protein>